<organism>
    <name type="scientific">Homo sapiens</name>
    <name type="common">Human</name>
    <dbReference type="NCBI Taxonomy" id="9606"/>
    <lineage>
        <taxon>Eukaryota</taxon>
        <taxon>Metazoa</taxon>
        <taxon>Chordata</taxon>
        <taxon>Craniata</taxon>
        <taxon>Vertebrata</taxon>
        <taxon>Euteleostomi</taxon>
        <taxon>Mammalia</taxon>
        <taxon>Eutheria</taxon>
        <taxon>Euarchontoglires</taxon>
        <taxon>Primates</taxon>
        <taxon>Haplorrhini</taxon>
        <taxon>Catarrhini</taxon>
        <taxon>Hominidae</taxon>
        <taxon>Homo</taxon>
    </lineage>
</organism>
<proteinExistence type="uncertain"/>
<feature type="signal peptide" evidence="2">
    <location>
        <begin position="1"/>
        <end position="16"/>
    </location>
</feature>
<feature type="chain" id="PRO_0000305223" description="Putative DBH-like monooxygenase protein 2">
    <location>
        <begin position="17"/>
        <end position="499"/>
    </location>
</feature>
<feature type="domain" description="DOMON" evidence="3">
    <location>
        <begin position="40"/>
        <end position="156"/>
    </location>
</feature>
<feature type="active site" evidence="2">
    <location>
        <position position="209"/>
    </location>
</feature>
<feature type="active site" evidence="2">
    <location>
        <position position="389"/>
    </location>
</feature>
<feature type="binding site" evidence="1">
    <location>
        <position position="241"/>
    </location>
    <ligand>
        <name>Cu cation</name>
        <dbReference type="ChEBI" id="CHEBI:23378"/>
        <label>A</label>
    </ligand>
</feature>
<feature type="binding site" evidence="1">
    <location>
        <position position="242"/>
    </location>
    <ligand>
        <name>Cu cation</name>
        <dbReference type="ChEBI" id="CHEBI:23378"/>
        <label>A</label>
    </ligand>
</feature>
<feature type="binding site" evidence="1">
    <location>
        <position position="308"/>
    </location>
    <ligand>
        <name>Cu cation</name>
        <dbReference type="ChEBI" id="CHEBI:23378"/>
        <label>A</label>
    </ligand>
</feature>
<feature type="binding site" evidence="1">
    <location>
        <position position="389"/>
    </location>
    <ligand>
        <name>Cu cation</name>
        <dbReference type="ChEBI" id="CHEBI:23378"/>
        <label>B</label>
    </ligand>
</feature>
<feature type="binding site" evidence="1">
    <location>
        <position position="391"/>
    </location>
    <ligand>
        <name>Cu cation</name>
        <dbReference type="ChEBI" id="CHEBI:23378"/>
        <label>B</label>
    </ligand>
</feature>
<feature type="binding site" evidence="1">
    <location>
        <position position="464"/>
    </location>
    <ligand>
        <name>Cu cation</name>
        <dbReference type="ChEBI" id="CHEBI:23378"/>
        <label>B</label>
    </ligand>
</feature>
<feature type="glycosylation site" description="N-linked (GlcNAc...) asparagine" evidence="2">
    <location>
        <position position="236"/>
    </location>
</feature>
<feature type="glycosylation site" description="N-linked (GlcNAc...) asparagine" evidence="2">
    <location>
        <position position="250"/>
    </location>
</feature>
<feature type="glycosylation site" description="N-linked (GlcNAc...) asparagine" evidence="2">
    <location>
        <position position="404"/>
    </location>
</feature>
<feature type="glycosylation site" description="N-linked (GlcNAc...) asparagine" evidence="2">
    <location>
        <position position="476"/>
    </location>
</feature>
<feature type="disulfide bond" evidence="1">
    <location>
        <begin position="211"/>
        <end position="261"/>
    </location>
</feature>
<feature type="disulfide bond" evidence="1">
    <location>
        <begin position="248"/>
        <end position="271"/>
    </location>
</feature>
<feature type="disulfide bond" evidence="1">
    <location>
        <begin position="365"/>
        <end position="480"/>
    </location>
</feature>
<feature type="disulfide bond" evidence="1">
    <location>
        <begin position="443"/>
        <end position="465"/>
    </location>
</feature>
<gene>
    <name type="primary">MOXD2P</name>
    <name type="synonym">MOXD2</name>
</gene>
<comment type="cofactor">
    <cofactor evidence="1">
        <name>Cu(2+)</name>
        <dbReference type="ChEBI" id="CHEBI:29036"/>
    </cofactor>
    <text evidence="1">Binds 2 copper ions per subunit.</text>
</comment>
<comment type="similarity">
    <text evidence="4">Belongs to the copper type II ascorbate-dependent monooxygenase family.</text>
</comment>
<comment type="caution">
    <text evidence="4">Could be the product of a pseudogene. The human MOXD2 gene lacks the last 2 terminal exons, as well as the 3'-UTR and poly(A) signal found in all other mammalian sequences. This deletion, which occured after the divergence of humans and chimpanzees, may interfere with proper mRNA processing and/or translation.</text>
</comment>
<dbReference type="EC" id="1.14.17.-"/>
<dbReference type="EMBL" id="U66059">
    <property type="status" value="NOT_ANNOTATED_CDS"/>
    <property type="molecule type" value="Genomic_DNA"/>
</dbReference>
<dbReference type="EMBL" id="DY655575">
    <property type="status" value="NOT_ANNOTATED_CDS"/>
    <property type="molecule type" value="mRNA"/>
</dbReference>
<dbReference type="SMR" id="A6NHM9"/>
<dbReference type="FunCoup" id="A6NHM9">
    <property type="interactions" value="5"/>
</dbReference>
<dbReference type="GlyCosmos" id="A6NHM9">
    <property type="glycosylation" value="4 sites, No reported glycans"/>
</dbReference>
<dbReference type="GlyGen" id="A6NHM9">
    <property type="glycosylation" value="4 sites"/>
</dbReference>
<dbReference type="BioMuta" id="HGNC:33605"/>
<dbReference type="AGR" id="HGNC:33605"/>
<dbReference type="GeneCards" id="MOXD2P"/>
<dbReference type="HGNC" id="HGNC:33605">
    <property type="gene designation" value="MOXD2P"/>
</dbReference>
<dbReference type="neXtProt" id="NX_A6NHM9"/>
<dbReference type="InParanoid" id="A6NHM9"/>
<dbReference type="PAN-GO" id="A6NHM9">
    <property type="GO annotations" value="7 GO annotations based on evolutionary models"/>
</dbReference>
<dbReference type="PhylomeDB" id="A6NHM9"/>
<dbReference type="Pharos" id="A6NHM9">
    <property type="development level" value="Tdark"/>
</dbReference>
<dbReference type="Proteomes" id="UP000005640">
    <property type="component" value="Unplaced"/>
</dbReference>
<dbReference type="RNAct" id="A6NHM9">
    <property type="molecule type" value="protein"/>
</dbReference>
<dbReference type="GO" id="GO:0005615">
    <property type="term" value="C:extracellular space"/>
    <property type="evidence" value="ECO:0000318"/>
    <property type="project" value="GO_Central"/>
</dbReference>
<dbReference type="GO" id="GO:0030667">
    <property type="term" value="C:secretory granule membrane"/>
    <property type="evidence" value="ECO:0000318"/>
    <property type="project" value="GO_Central"/>
</dbReference>
<dbReference type="GO" id="GO:0005507">
    <property type="term" value="F:copper ion binding"/>
    <property type="evidence" value="ECO:0000318"/>
    <property type="project" value="GO_Central"/>
</dbReference>
<dbReference type="GO" id="GO:0004500">
    <property type="term" value="F:dopamine beta-monooxygenase activity"/>
    <property type="evidence" value="ECO:0000318"/>
    <property type="project" value="GO_Central"/>
</dbReference>
<dbReference type="GO" id="GO:0042420">
    <property type="term" value="P:dopamine catabolic process"/>
    <property type="evidence" value="ECO:0000318"/>
    <property type="project" value="GO_Central"/>
</dbReference>
<dbReference type="GO" id="GO:0042421">
    <property type="term" value="P:norepinephrine biosynthetic process"/>
    <property type="evidence" value="ECO:0000318"/>
    <property type="project" value="GO_Central"/>
</dbReference>
<dbReference type="GO" id="GO:0006589">
    <property type="term" value="P:octopamine biosynthetic process"/>
    <property type="evidence" value="ECO:0000318"/>
    <property type="project" value="GO_Central"/>
</dbReference>
<dbReference type="CDD" id="cd09631">
    <property type="entry name" value="DOMON_DOH"/>
    <property type="match status" value="1"/>
</dbReference>
<dbReference type="FunFam" id="2.60.120.230:FF:000001">
    <property type="entry name" value="Monooxygenase, DBH-like 1"/>
    <property type="match status" value="1"/>
</dbReference>
<dbReference type="FunFam" id="2.60.120.310:FF:000006">
    <property type="entry name" value="Monooxygenase, DBH-like 2, pseudogene"/>
    <property type="match status" value="1"/>
</dbReference>
<dbReference type="Gene3D" id="2.60.120.230">
    <property type="match status" value="1"/>
</dbReference>
<dbReference type="Gene3D" id="2.60.120.310">
    <property type="entry name" value="Copper type II, ascorbate-dependent monooxygenase, N-terminal domain"/>
    <property type="match status" value="1"/>
</dbReference>
<dbReference type="InterPro" id="IPR014784">
    <property type="entry name" value="Cu2_ascorb_mOase-like_C"/>
</dbReference>
<dbReference type="InterPro" id="IPR000323">
    <property type="entry name" value="Cu2_ascorb_mOase_N"/>
</dbReference>
<dbReference type="InterPro" id="IPR036939">
    <property type="entry name" value="Cu2_ascorb_mOase_N_sf"/>
</dbReference>
<dbReference type="InterPro" id="IPR024548">
    <property type="entry name" value="Cu2_monoox_C"/>
</dbReference>
<dbReference type="InterPro" id="IPR000945">
    <property type="entry name" value="DBH-like"/>
</dbReference>
<dbReference type="InterPro" id="IPR045266">
    <property type="entry name" value="DOH_DOMON"/>
</dbReference>
<dbReference type="InterPro" id="IPR005018">
    <property type="entry name" value="DOMON_domain"/>
</dbReference>
<dbReference type="InterPro" id="IPR008977">
    <property type="entry name" value="PHM/PNGase_F_dom_sf"/>
</dbReference>
<dbReference type="InterPro" id="IPR028460">
    <property type="entry name" value="Tbh/DBH"/>
</dbReference>
<dbReference type="PANTHER" id="PTHR10157:SF31">
    <property type="entry name" value="DBH-LIKE MONOOXYGENASE PROTEIN 2-RELATED"/>
    <property type="match status" value="1"/>
</dbReference>
<dbReference type="PANTHER" id="PTHR10157">
    <property type="entry name" value="DOPAMINE BETA HYDROXYLASE RELATED"/>
    <property type="match status" value="1"/>
</dbReference>
<dbReference type="Pfam" id="PF03712">
    <property type="entry name" value="Cu2_monoox_C"/>
    <property type="match status" value="1"/>
</dbReference>
<dbReference type="Pfam" id="PF01082">
    <property type="entry name" value="Cu2_monooxygen"/>
    <property type="match status" value="1"/>
</dbReference>
<dbReference type="Pfam" id="PF03351">
    <property type="entry name" value="DOMON"/>
    <property type="match status" value="1"/>
</dbReference>
<dbReference type="PRINTS" id="PR00767">
    <property type="entry name" value="DBMONOXGNASE"/>
</dbReference>
<dbReference type="SMART" id="SM00664">
    <property type="entry name" value="DoH"/>
    <property type="match status" value="1"/>
</dbReference>
<dbReference type="SUPFAM" id="SSF49742">
    <property type="entry name" value="PHM/PNGase F"/>
    <property type="match status" value="2"/>
</dbReference>
<dbReference type="PROSITE" id="PS50836">
    <property type="entry name" value="DOMON"/>
    <property type="match status" value="1"/>
</dbReference>
<protein>
    <recommendedName>
        <fullName>Putative DBH-like monooxygenase protein 2</fullName>
        <ecNumber>1.14.17.-</ecNumber>
    </recommendedName>
    <alternativeName>
        <fullName>DBH-like monooxygenase protein 2 pseudogene</fullName>
    </alternativeName>
</protein>
<evidence type="ECO:0000250" key="1"/>
<evidence type="ECO:0000255" key="2"/>
<evidence type="ECO:0000255" key="3">
    <source>
        <dbReference type="PROSITE-ProRule" id="PRU00246"/>
    </source>
</evidence>
<evidence type="ECO:0000305" key="4"/>
<name>MOXD2_HUMAN</name>
<keyword id="KW-0186">Copper</keyword>
<keyword id="KW-1015">Disulfide bond</keyword>
<keyword id="KW-0325">Glycoprotein</keyword>
<keyword id="KW-0479">Metal-binding</keyword>
<keyword id="KW-0503">Monooxygenase</keyword>
<keyword id="KW-0560">Oxidoreductase</keyword>
<keyword id="KW-1185">Reference proteome</keyword>
<keyword id="KW-0732">Signal</keyword>
<reference key="1">
    <citation type="journal article" date="2003" name="Nature">
        <title>The DNA sequence of human chromosome 7.</title>
        <authorList>
            <person name="Hillier L.W."/>
            <person name="Fulton R.S."/>
            <person name="Fulton L.A."/>
            <person name="Graves T.A."/>
            <person name="Pepin K.H."/>
            <person name="Wagner-McPherson C."/>
            <person name="Layman D."/>
            <person name="Maas J."/>
            <person name="Jaeger S."/>
            <person name="Walker R."/>
            <person name="Wylie K."/>
            <person name="Sekhon M."/>
            <person name="Becker M.C."/>
            <person name="O'Laughlin M.D."/>
            <person name="Schaller M.E."/>
            <person name="Fewell G.A."/>
            <person name="Delehaunty K.D."/>
            <person name="Miner T.L."/>
            <person name="Nash W.E."/>
            <person name="Cordes M."/>
            <person name="Du H."/>
            <person name="Sun H."/>
            <person name="Edwards J."/>
            <person name="Bradshaw-Cordum H."/>
            <person name="Ali J."/>
            <person name="Andrews S."/>
            <person name="Isak A."/>
            <person name="Vanbrunt A."/>
            <person name="Nguyen C."/>
            <person name="Du F."/>
            <person name="Lamar B."/>
            <person name="Courtney L."/>
            <person name="Kalicki J."/>
            <person name="Ozersky P."/>
            <person name="Bielicki L."/>
            <person name="Scott K."/>
            <person name="Holmes A."/>
            <person name="Harkins R."/>
            <person name="Harris A."/>
            <person name="Strong C.M."/>
            <person name="Hou S."/>
            <person name="Tomlinson C."/>
            <person name="Dauphin-Kohlberg S."/>
            <person name="Kozlowicz-Reilly A."/>
            <person name="Leonard S."/>
            <person name="Rohlfing T."/>
            <person name="Rock S.M."/>
            <person name="Tin-Wollam A.-M."/>
            <person name="Abbott A."/>
            <person name="Minx P."/>
            <person name="Maupin R."/>
            <person name="Strowmatt C."/>
            <person name="Latreille P."/>
            <person name="Miller N."/>
            <person name="Johnson D."/>
            <person name="Murray J."/>
            <person name="Woessner J.P."/>
            <person name="Wendl M.C."/>
            <person name="Yang S.-P."/>
            <person name="Schultz B.R."/>
            <person name="Wallis J.W."/>
            <person name="Spieth J."/>
            <person name="Bieri T.A."/>
            <person name="Nelson J.O."/>
            <person name="Berkowicz N."/>
            <person name="Wohldmann P.E."/>
            <person name="Cook L.L."/>
            <person name="Hickenbotham M.T."/>
            <person name="Eldred J."/>
            <person name="Williams D."/>
            <person name="Bedell J.A."/>
            <person name="Mardis E.R."/>
            <person name="Clifton S.W."/>
            <person name="Chissoe S.L."/>
            <person name="Marra M.A."/>
            <person name="Raymond C."/>
            <person name="Haugen E."/>
            <person name="Gillett W."/>
            <person name="Zhou Y."/>
            <person name="James R."/>
            <person name="Phelps K."/>
            <person name="Iadanoto S."/>
            <person name="Bubb K."/>
            <person name="Simms E."/>
            <person name="Levy R."/>
            <person name="Clendenning J."/>
            <person name="Kaul R."/>
            <person name="Kent W.J."/>
            <person name="Furey T.S."/>
            <person name="Baertsch R.A."/>
            <person name="Brent M.R."/>
            <person name="Keibler E."/>
            <person name="Flicek P."/>
            <person name="Bork P."/>
            <person name="Suyama M."/>
            <person name="Bailey J.A."/>
            <person name="Portnoy M.E."/>
            <person name="Torrents D."/>
            <person name="Chinwalla A.T."/>
            <person name="Gish W.R."/>
            <person name="Eddy S.R."/>
            <person name="McPherson J.D."/>
            <person name="Olson M.V."/>
            <person name="Eichler E.E."/>
            <person name="Green E.D."/>
            <person name="Waterston R.H."/>
            <person name="Wilson R.K."/>
        </authorList>
    </citation>
    <scope>NUCLEOTIDE SEQUENCE [LARGE SCALE GENOMIC DNA]</scope>
</reference>
<reference key="2">
    <citation type="journal article" date="2004" name="Genome Res.">
        <title>The status, quality, and expansion of the NIH full-length cDNA project: the Mammalian Gene Collection (MGC).</title>
        <authorList>
            <consortium name="The MGC Project Team"/>
        </authorList>
    </citation>
    <scope>NUCLEOTIDE SEQUENCE [LARGE SCALE MRNA] OF 347-487</scope>
</reference>
<reference key="3">
    <citation type="journal article" date="2007" name="Mol. Biol. Evol.">
        <title>Inactivation of MOXD2 and S100A15A by exon deletion during human evolution.</title>
        <authorList>
            <person name="Hahn Y."/>
            <person name="Jeong S."/>
            <person name="Lee B."/>
        </authorList>
    </citation>
    <scope>GENE STRUCTURE</scope>
</reference>
<accession>A6NHM9</accession>
<sequence length="499" mass="56320">MAHDLLFRLFPLLALGVPLQSNRLGPTSRLRYSRFLDPSNVIFLRWDFDLEAEIISFELQVRTAGWVGFGVTNRYTNVGSDLVVGGVLPNGNVYFSDQHLVEEDTLKEDGSQDAELLGLTEDAVYTTMHFSRPFRSCDPHDLDITSNTVRVLAAYGLDDTLKLYRERTFVKSIFLLQVVHPDDLDVPEDTIIHDLEITNFLIPEDDTTYACTFLPLPIVSEKHHIYKFEPKLVYHNETTVHHILVYACGNASVLPTGISDCYGADPAFSLCSQVIVGSAVGGTSYQFPDDVGVSIGTPLDPQWILEIHYSNFNNLPGVYDSSGIRVYYTSQLCKYDTDVLQLGFFTFPIHFIPPGAESFMSYGLCRTEKFEEMNGAPMPDIQVYGYLLHTHLAGRALQAVQYRNGTQLRKICKDDSYDFNLQETRDLPSRVEIKPGDELLVECHYQTLDRDSMTFGGPSTINEMCLIFLFYYPQNNISSCMGYPDIIYVAHELGEEASE</sequence>